<sequence>MIIKPRVRGFICVTTHPAGCEANVKQQIDYVEAKGPVVNGPKKVLVIGSSTGYGLAARITAAFGSGADTLGVFFERPGSESKPGTAGWYNSAAFEKFAHEKGLYARSINGDAFSDEVKRLTIETIKRDLGKVDLVVYSLAAPRRTHPKSGEVFSSTLKPIGKSVSFRGLDTDKEVIKDVVLEAASDQEVADTVAVMGGEDWQMWIDALLEADVLADGAKTTAFTYLGEKITHDIYWNGSIGAAKKDLDQKVLGIRDKLAPLGGDARVSVLKAVVTQASSAIPMMPLYLSLLFKVMKEQGTHEGCIEQVDGLYRESLYGAEPRLDEEGRLRADYKELQPEVQSRVEELWDKVTNENLYELTDFAGYKSEFLNLFGFEVAGVDYEQDVNPDVQIANLIQA</sequence>
<feature type="chain" id="PRO_0000220046" description="Enoyl-[acyl-carrier-protein] reductase [NADH]">
    <location>
        <begin position="1"/>
        <end position="398"/>
    </location>
</feature>
<feature type="active site" description="Proton donor" evidence="1">
    <location>
        <position position="235"/>
    </location>
</feature>
<feature type="binding site" evidence="1">
    <location>
        <begin position="48"/>
        <end position="53"/>
    </location>
    <ligand>
        <name>NAD(+)</name>
        <dbReference type="ChEBI" id="CHEBI:57540"/>
    </ligand>
</feature>
<feature type="binding site" evidence="1">
    <location>
        <begin position="74"/>
        <end position="75"/>
    </location>
    <ligand>
        <name>NAD(+)</name>
        <dbReference type="ChEBI" id="CHEBI:57540"/>
    </ligand>
</feature>
<feature type="binding site" evidence="1">
    <location>
        <begin position="111"/>
        <end position="112"/>
    </location>
    <ligand>
        <name>NAD(+)</name>
        <dbReference type="ChEBI" id="CHEBI:57540"/>
    </ligand>
</feature>
<feature type="binding site" evidence="1">
    <location>
        <begin position="139"/>
        <end position="140"/>
    </location>
    <ligand>
        <name>NAD(+)</name>
        <dbReference type="ChEBI" id="CHEBI:57540"/>
    </ligand>
</feature>
<feature type="binding site" evidence="1">
    <location>
        <position position="225"/>
    </location>
    <ligand>
        <name>substrate</name>
    </ligand>
</feature>
<feature type="binding site" evidence="1">
    <location>
        <position position="244"/>
    </location>
    <ligand>
        <name>NAD(+)</name>
        <dbReference type="ChEBI" id="CHEBI:57540"/>
    </ligand>
</feature>
<feature type="binding site" evidence="1">
    <location>
        <begin position="273"/>
        <end position="275"/>
    </location>
    <ligand>
        <name>NAD(+)</name>
        <dbReference type="ChEBI" id="CHEBI:57540"/>
    </ligand>
</feature>
<feature type="site" description="Plays an important role in discriminating NADH against NADPH" evidence="1">
    <location>
        <position position="75"/>
    </location>
</feature>
<feature type="mutagenesis site" description="It retains 17% of the reductase activity of the wild-type. Loss of reductase activity; when associated with M-244." evidence="2">
    <original>Y</original>
    <variation>F</variation>
    <location>
        <position position="235"/>
    </location>
</feature>
<feature type="mutagenesis site" description="It retains 1.7% of the reductase activity of the wild-type. Loss of reductase activity; when associated with F-235." evidence="2">
    <original>K</original>
    <variation>M</variation>
    <location>
        <position position="244"/>
    </location>
</feature>
<gene>
    <name evidence="1" type="primary">fabV</name>
    <name type="ordered locus">PA2950</name>
</gene>
<reference key="1">
    <citation type="journal article" date="2000" name="Nature">
        <title>Complete genome sequence of Pseudomonas aeruginosa PAO1, an opportunistic pathogen.</title>
        <authorList>
            <person name="Stover C.K."/>
            <person name="Pham X.-Q.T."/>
            <person name="Erwin A.L."/>
            <person name="Mizoguchi S.D."/>
            <person name="Warrener P."/>
            <person name="Hickey M.J."/>
            <person name="Brinkman F.S.L."/>
            <person name="Hufnagle W.O."/>
            <person name="Kowalik D.J."/>
            <person name="Lagrou M."/>
            <person name="Garber R.L."/>
            <person name="Goltry L."/>
            <person name="Tolentino E."/>
            <person name="Westbrock-Wadman S."/>
            <person name="Yuan Y."/>
            <person name="Brody L.L."/>
            <person name="Coulter S.N."/>
            <person name="Folger K.R."/>
            <person name="Kas A."/>
            <person name="Larbig K."/>
            <person name="Lim R.M."/>
            <person name="Smith K.A."/>
            <person name="Spencer D.H."/>
            <person name="Wong G.K.-S."/>
            <person name="Wu Z."/>
            <person name="Paulsen I.T."/>
            <person name="Reizer J."/>
            <person name="Saier M.H. Jr."/>
            <person name="Hancock R.E.W."/>
            <person name="Lory S."/>
            <person name="Olson M.V."/>
        </authorList>
    </citation>
    <scope>NUCLEOTIDE SEQUENCE [LARGE SCALE GENOMIC DNA]</scope>
    <source>
        <strain>ATCC 15692 / DSM 22644 / CIP 104116 / JCM 14847 / LMG 12228 / 1C / PRS 101 / PAO1</strain>
    </source>
</reference>
<reference key="2">
    <citation type="journal article" date="2010" name="Antimicrob. Agents Chemother.">
        <title>Triclosan resistance of Pseudomonas aeruginosa PAO1 is due to FabV, a triclosan-resistant enoyl-acyl carrier protein reductase.</title>
        <authorList>
            <person name="Zhu L."/>
            <person name="Lin J."/>
            <person name="Ma J."/>
            <person name="Cronan J.E."/>
            <person name="Wang H."/>
        </authorList>
    </citation>
    <scope>FUNCTION</scope>
    <scope>CATALYTIC ACTIVITY</scope>
    <scope>BIOPHYSICOCHEMICAL PROPERTIES</scope>
    <scope>MUTAGENESIS OF TYR-235 AND LYS-244</scope>
    <scope>ACTIVITY REGULATION</scope>
    <scope>DISRUPTION PHENOTYPE</scope>
    <scope>SUBSTRATE SPECIFICITY</scope>
    <scope>PATHWAY</scope>
    <source>
        <strain>ATCC 15692 / DSM 22644 / CIP 104116 / JCM 14847 / LMG 12228 / 1C / PRS 101 / PAO1</strain>
    </source>
</reference>
<evidence type="ECO:0000255" key="1">
    <source>
        <dbReference type="HAMAP-Rule" id="MF_01838"/>
    </source>
</evidence>
<evidence type="ECO:0000269" key="2">
    <source>
    </source>
</evidence>
<evidence type="ECO:0000303" key="3">
    <source>
    </source>
</evidence>
<evidence type="ECO:0000305" key="4">
    <source>
    </source>
</evidence>
<dbReference type="EC" id="1.3.1.9" evidence="2"/>
<dbReference type="EC" id="1.3.1.44" evidence="2"/>
<dbReference type="EMBL" id="AE004091">
    <property type="protein sequence ID" value="AAG06338.1"/>
    <property type="molecule type" value="Genomic_DNA"/>
</dbReference>
<dbReference type="PIR" id="A83277">
    <property type="entry name" value="A83277"/>
</dbReference>
<dbReference type="RefSeq" id="NP_251640.1">
    <property type="nucleotide sequence ID" value="NC_002516.2"/>
</dbReference>
<dbReference type="RefSeq" id="WP_003102929.1">
    <property type="nucleotide sequence ID" value="NZ_QZGE01000009.1"/>
</dbReference>
<dbReference type="SMR" id="Q9HZP8"/>
<dbReference type="STRING" id="208964.PA2950"/>
<dbReference type="PaxDb" id="208964-PA2950"/>
<dbReference type="DNASU" id="882931"/>
<dbReference type="GeneID" id="882931"/>
<dbReference type="KEGG" id="pae:PA2950"/>
<dbReference type="PATRIC" id="fig|208964.12.peg.3096"/>
<dbReference type="PseudoCAP" id="PA2950"/>
<dbReference type="HOGENOM" id="CLU_057698_1_0_6"/>
<dbReference type="InParanoid" id="Q9HZP8"/>
<dbReference type="OrthoDB" id="9802260at2"/>
<dbReference type="PhylomeDB" id="Q9HZP8"/>
<dbReference type="BioCyc" id="PAER208964:G1FZ6-3001-MONOMER"/>
<dbReference type="BRENDA" id="1.3.1.9">
    <property type="organism ID" value="5087"/>
</dbReference>
<dbReference type="SABIO-RK" id="Q9HZP8"/>
<dbReference type="UniPathway" id="UPA00094"/>
<dbReference type="Proteomes" id="UP000002438">
    <property type="component" value="Chromosome"/>
</dbReference>
<dbReference type="GO" id="GO:0004318">
    <property type="term" value="F:enoyl-[acyl-carrier-protein] reductase (NADH) activity"/>
    <property type="evidence" value="ECO:0000314"/>
    <property type="project" value="UniProtKB"/>
</dbReference>
<dbReference type="GO" id="GO:0051287">
    <property type="term" value="F:NAD binding"/>
    <property type="evidence" value="ECO:0000314"/>
    <property type="project" value="UniProtKB"/>
</dbReference>
<dbReference type="GO" id="GO:0050343">
    <property type="term" value="F:trans-2-enoyl-CoA reductase (NADH) activity"/>
    <property type="evidence" value="ECO:0000314"/>
    <property type="project" value="UniProtKB"/>
</dbReference>
<dbReference type="GO" id="GO:0006633">
    <property type="term" value="P:fatty acid biosynthetic process"/>
    <property type="evidence" value="ECO:0000314"/>
    <property type="project" value="UniProtKB"/>
</dbReference>
<dbReference type="FunFam" id="3.40.50.720:FF:000221">
    <property type="entry name" value="Enoyl-[acyl-carrier-protein] reductase [NADH]"/>
    <property type="match status" value="1"/>
</dbReference>
<dbReference type="Gene3D" id="3.40.50.720">
    <property type="entry name" value="NAD(P)-binding Rossmann-like Domain"/>
    <property type="match status" value="1"/>
</dbReference>
<dbReference type="HAMAP" id="MF_01838">
    <property type="entry name" value="FabV_reductase"/>
    <property type="match status" value="1"/>
</dbReference>
<dbReference type="InterPro" id="IPR024906">
    <property type="entry name" value="Eno_Rdtase_FAD-bd_dom"/>
</dbReference>
<dbReference type="InterPro" id="IPR024910">
    <property type="entry name" value="Enoyl-CoA_Rdtase_cat_dom"/>
</dbReference>
<dbReference type="InterPro" id="IPR050048">
    <property type="entry name" value="FabV-like_NADH_b"/>
</dbReference>
<dbReference type="InterPro" id="IPR010758">
    <property type="entry name" value="Trans-2-enoyl-CoA_reductase"/>
</dbReference>
<dbReference type="NCBIfam" id="NF043048">
    <property type="entry name" value="EnoyACPredFabV"/>
    <property type="match status" value="1"/>
</dbReference>
<dbReference type="NCBIfam" id="NF010177">
    <property type="entry name" value="PRK13656.1"/>
    <property type="match status" value="1"/>
</dbReference>
<dbReference type="PANTHER" id="PTHR37480">
    <property type="entry name" value="ENOYL-[ACYL-CARRIER-PROTEIN] REDUCTASE [NADH]"/>
    <property type="match status" value="1"/>
</dbReference>
<dbReference type="PANTHER" id="PTHR37480:SF1">
    <property type="entry name" value="ENOYL-[ACYL-CARRIER-PROTEIN] REDUCTASE [NADH]"/>
    <property type="match status" value="1"/>
</dbReference>
<dbReference type="Pfam" id="PF07055">
    <property type="entry name" value="Eno-Rase_FAD_bd"/>
    <property type="match status" value="1"/>
</dbReference>
<dbReference type="Pfam" id="PF12242">
    <property type="entry name" value="Eno-Rase_NADH_b"/>
    <property type="match status" value="1"/>
</dbReference>
<dbReference type="Pfam" id="PF12241">
    <property type="entry name" value="Enoyl_reductase"/>
    <property type="match status" value="1"/>
</dbReference>
<proteinExistence type="evidence at protein level"/>
<protein>
    <recommendedName>
        <fullName evidence="3">Enoyl-[acyl-carrier-protein] reductase [NADH]</fullName>
        <shortName evidence="3">ENR</shortName>
        <ecNumber evidence="2">1.3.1.9</ecNumber>
    </recommendedName>
    <alternativeName>
        <fullName evidence="3">Trans-2-enoyl-CoA reductase</fullName>
        <shortName evidence="3">TER</shortName>
        <ecNumber evidence="2">1.3.1.44</ecNumber>
    </alternativeName>
</protein>
<organism>
    <name type="scientific">Pseudomonas aeruginosa (strain ATCC 15692 / DSM 22644 / CIP 104116 / JCM 14847 / LMG 12228 / 1C / PRS 101 / PAO1)</name>
    <dbReference type="NCBI Taxonomy" id="208964"/>
    <lineage>
        <taxon>Bacteria</taxon>
        <taxon>Pseudomonadati</taxon>
        <taxon>Pseudomonadota</taxon>
        <taxon>Gammaproteobacteria</taxon>
        <taxon>Pseudomonadales</taxon>
        <taxon>Pseudomonadaceae</taxon>
        <taxon>Pseudomonas</taxon>
    </lineage>
</organism>
<accession>Q9HZP8</accession>
<comment type="function">
    <text evidence="2">Involved in the final reduction of the elongation cycle of fatty acid synthesis (FAS II). Catalyzes the reduction of a carbon-carbon double bond in an enoyl moiety that is covalently linked to an acyl carrier protein (ACP). It can use both crotonyl-CoA and trans-2-decenoyl-ACP. It is able to convert trans-2-enoyl-ACP of different length (C2 to C16) to the corresponding acyl-ACP.</text>
</comment>
<comment type="catalytic activity">
    <reaction evidence="2">
        <text>a 2,3-saturated acyl-[ACP] + NAD(+) = a (2E)-enoyl-[ACP] + NADH + H(+)</text>
        <dbReference type="Rhea" id="RHEA:10240"/>
        <dbReference type="Rhea" id="RHEA-COMP:9925"/>
        <dbReference type="Rhea" id="RHEA-COMP:9926"/>
        <dbReference type="ChEBI" id="CHEBI:15378"/>
        <dbReference type="ChEBI" id="CHEBI:57540"/>
        <dbReference type="ChEBI" id="CHEBI:57945"/>
        <dbReference type="ChEBI" id="CHEBI:78784"/>
        <dbReference type="ChEBI" id="CHEBI:78785"/>
        <dbReference type="EC" id="1.3.1.9"/>
    </reaction>
</comment>
<comment type="catalytic activity">
    <reaction evidence="2">
        <text>a 2,3-saturated acyl-CoA + NAD(+) = a (2E)-enoyl-CoA + NADH + H(+)</text>
        <dbReference type="Rhea" id="RHEA:18177"/>
        <dbReference type="ChEBI" id="CHEBI:15378"/>
        <dbReference type="ChEBI" id="CHEBI:57540"/>
        <dbReference type="ChEBI" id="CHEBI:57945"/>
        <dbReference type="ChEBI" id="CHEBI:58856"/>
        <dbReference type="ChEBI" id="CHEBI:65111"/>
        <dbReference type="EC" id="1.3.1.44"/>
    </reaction>
</comment>
<comment type="activity regulation">
    <text evidence="2">Not sensitive to tricolsan.</text>
</comment>
<comment type="biophysicochemical properties">
    <kinetics>
        <KM evidence="2">691 uM for trans-2-decenoyl-ACP</KM>
        <KM evidence="2">704.3 uM for crotonyl-CoA</KM>
        <Vmax evidence="2">7.9 nmol/min/mg enzyme for reductase activity with crotonyl-CoA</Vmax>
        <Vmax evidence="2">243.3 nmol/min/mg enzyme for reductase activity with trans-2-decenoyl-ACP</Vmax>
    </kinetics>
</comment>
<comment type="pathway">
    <text evidence="4">Lipid metabolism; fatty acid biosynthesis.</text>
</comment>
<comment type="subunit">
    <text evidence="1">Monomer.</text>
</comment>
<comment type="disruption phenotype">
    <text evidence="2">Cells lacking this gene produce significantly more unsaturated fatty acids than wild-type. The ratio of unsaturated fatty acids to saturated fatty acids in wild-type is 0.76, whereas in the fabV mutant this ratio is increased to 1.12. The major unsaturated fatty acid is the C16:1. When triclosan is added to the reaction mixture, the reductase activity decreases to 15% of the untreated wild-type.</text>
</comment>
<comment type="similarity">
    <text evidence="1">Belongs to the TER reductase family.</text>
</comment>
<name>FABV_PSEAE</name>
<keyword id="KW-0275">Fatty acid biosynthesis</keyword>
<keyword id="KW-0276">Fatty acid metabolism</keyword>
<keyword id="KW-0444">Lipid biosynthesis</keyword>
<keyword id="KW-0443">Lipid metabolism</keyword>
<keyword id="KW-0520">NAD</keyword>
<keyword id="KW-0560">Oxidoreductase</keyword>
<keyword id="KW-1185">Reference proteome</keyword>